<proteinExistence type="evidence at protein level"/>
<feature type="chain" id="PRO_0000087466" description="Probable spore germination protein GerPB">
    <location>
        <begin position="1"/>
        <end position="68"/>
    </location>
</feature>
<name>GERPB_BACCE</name>
<accession>P0A3T7</accession>
<accession>O68684</accession>
<gene>
    <name type="primary">gerPB</name>
</gene>
<organism>
    <name type="scientific">Bacillus cereus</name>
    <dbReference type="NCBI Taxonomy" id="1396"/>
    <lineage>
        <taxon>Bacteria</taxon>
        <taxon>Bacillati</taxon>
        <taxon>Bacillota</taxon>
        <taxon>Bacilli</taxon>
        <taxon>Bacillales</taxon>
        <taxon>Bacillaceae</taxon>
        <taxon>Bacillus</taxon>
        <taxon>Bacillus cereus group</taxon>
    </lineage>
</organism>
<keyword id="KW-0309">Germination</keyword>
<keyword id="KW-0749">Sporulation</keyword>
<sequence length="68" mass="7222">MNFYVNQSIIINSIKIDSITTSSVFQIGTAGSIKALSKFSNTGGFTEPLRPLQAKGQIISIKPSTSSS</sequence>
<reference key="1">
    <citation type="journal article" date="2000" name="J. Bacteriol.">
        <title>Mutations in the gerP locus of Bacillus subtilis and Bacillus cereus affect access of germinants to their targets in spores.</title>
        <authorList>
            <person name="Behravan J."/>
            <person name="Chirakkal H."/>
            <person name="Masson A."/>
            <person name="Moir A."/>
        </authorList>
    </citation>
    <scope>NUCLEOTIDE SEQUENCE [GENOMIC DNA]</scope>
    <scope>CHARACTERIZATION</scope>
    <source>
        <strain>ATCC 10876 / DSM 9378 / NRRL B-569</strain>
    </source>
</reference>
<protein>
    <recommendedName>
        <fullName>Probable spore germination protein GerPB</fullName>
    </recommendedName>
</protein>
<dbReference type="EMBL" id="AF053927">
    <property type="protein sequence ID" value="AAC08013.1"/>
    <property type="molecule type" value="Genomic_DNA"/>
</dbReference>
<dbReference type="RefSeq" id="WP_001012508.1">
    <property type="nucleotide sequence ID" value="NZ_WBPI01000021.1"/>
</dbReference>
<dbReference type="GeneID" id="93009895"/>
<dbReference type="eggNOG" id="ENOG50335HY">
    <property type="taxonomic scope" value="Bacteria"/>
</dbReference>
<dbReference type="OMA" id="YISQSIC"/>
<dbReference type="OrthoDB" id="2971631at2"/>
<dbReference type="GO" id="GO:0030435">
    <property type="term" value="P:sporulation resulting in formation of a cellular spore"/>
    <property type="evidence" value="ECO:0007669"/>
    <property type="project" value="UniProtKB-KW"/>
</dbReference>
<dbReference type="InterPro" id="IPR024255">
    <property type="entry name" value="GerPB"/>
</dbReference>
<dbReference type="Pfam" id="PF10803">
    <property type="entry name" value="GerPB"/>
    <property type="match status" value="1"/>
</dbReference>
<comment type="function">
    <text>Required for the formation of functionally normal spores. Could be involved in the establishment of normal spore coat structure and/or permeability, which allows the access of germinants to their receptor.</text>
</comment>
<comment type="developmental stage">
    <text>Expressed during sporulation, around the time of spore coat synthesis and assembly, in mother cell compartment.</text>
</comment>
<comment type="induction">
    <text>Expression is sigma K-dependent and negatively regulated by GerE.</text>
</comment>